<comment type="catalytic activity">
    <reaction>
        <text>Preferential cleavage: Arg-|-Xaa, Lys-|-Xaa.</text>
        <dbReference type="EC" id="3.4.21.4"/>
    </reaction>
</comment>
<comment type="subcellular location">
    <subcellularLocation>
        <location>Secreted</location>
        <location>Extracellular space</location>
    </subcellularLocation>
</comment>
<comment type="similarity">
    <text evidence="2">Belongs to the peptidase S1 family.</text>
</comment>
<accession>P54627</accession>
<gene>
    <name type="primary">epsilonTry</name>
</gene>
<keyword id="KW-1015">Disulfide bond</keyword>
<keyword id="KW-0378">Hydrolase</keyword>
<keyword id="KW-0645">Protease</keyword>
<keyword id="KW-0964">Secreted</keyword>
<keyword id="KW-0720">Serine protease</keyword>
<keyword id="KW-0732">Signal</keyword>
<keyword id="KW-0865">Zymogen</keyword>
<dbReference type="EC" id="3.4.21.4"/>
<dbReference type="EMBL" id="U40653">
    <property type="protein sequence ID" value="AAA83240.1"/>
    <property type="molecule type" value="Genomic_DNA"/>
</dbReference>
<dbReference type="SMR" id="P54627"/>
<dbReference type="MEROPS" id="S01.A82"/>
<dbReference type="eggNOG" id="KOG3627">
    <property type="taxonomic scope" value="Eukaryota"/>
</dbReference>
<dbReference type="OrthoDB" id="10059102at2759"/>
<dbReference type="GO" id="GO:0005576">
    <property type="term" value="C:extracellular region"/>
    <property type="evidence" value="ECO:0007669"/>
    <property type="project" value="UniProtKB-SubCell"/>
</dbReference>
<dbReference type="GO" id="GO:0004252">
    <property type="term" value="F:serine-type endopeptidase activity"/>
    <property type="evidence" value="ECO:0007669"/>
    <property type="project" value="UniProtKB-EC"/>
</dbReference>
<dbReference type="GO" id="GO:0006508">
    <property type="term" value="P:proteolysis"/>
    <property type="evidence" value="ECO:0007669"/>
    <property type="project" value="UniProtKB-KW"/>
</dbReference>
<dbReference type="CDD" id="cd00190">
    <property type="entry name" value="Tryp_SPc"/>
    <property type="match status" value="1"/>
</dbReference>
<dbReference type="FunFam" id="2.40.10.10:FF:000077">
    <property type="entry name" value="Predicted protein"/>
    <property type="match status" value="1"/>
</dbReference>
<dbReference type="Gene3D" id="2.40.10.10">
    <property type="entry name" value="Trypsin-like serine proteases"/>
    <property type="match status" value="1"/>
</dbReference>
<dbReference type="InterPro" id="IPR050430">
    <property type="entry name" value="Peptidase_S1"/>
</dbReference>
<dbReference type="InterPro" id="IPR009003">
    <property type="entry name" value="Peptidase_S1_PA"/>
</dbReference>
<dbReference type="InterPro" id="IPR043504">
    <property type="entry name" value="Peptidase_S1_PA_chymotrypsin"/>
</dbReference>
<dbReference type="InterPro" id="IPR001314">
    <property type="entry name" value="Peptidase_S1A"/>
</dbReference>
<dbReference type="InterPro" id="IPR001254">
    <property type="entry name" value="Trypsin_dom"/>
</dbReference>
<dbReference type="InterPro" id="IPR018114">
    <property type="entry name" value="TRYPSIN_HIS"/>
</dbReference>
<dbReference type="InterPro" id="IPR033116">
    <property type="entry name" value="TRYPSIN_SER"/>
</dbReference>
<dbReference type="PANTHER" id="PTHR24276:SF91">
    <property type="entry name" value="AT26814P-RELATED"/>
    <property type="match status" value="1"/>
</dbReference>
<dbReference type="PANTHER" id="PTHR24276">
    <property type="entry name" value="POLYSERASE-RELATED"/>
    <property type="match status" value="1"/>
</dbReference>
<dbReference type="Pfam" id="PF00089">
    <property type="entry name" value="Trypsin"/>
    <property type="match status" value="1"/>
</dbReference>
<dbReference type="PRINTS" id="PR00722">
    <property type="entry name" value="CHYMOTRYPSIN"/>
</dbReference>
<dbReference type="SMART" id="SM00020">
    <property type="entry name" value="Tryp_SPc"/>
    <property type="match status" value="1"/>
</dbReference>
<dbReference type="SUPFAM" id="SSF50494">
    <property type="entry name" value="Trypsin-like serine proteases"/>
    <property type="match status" value="1"/>
</dbReference>
<dbReference type="PROSITE" id="PS50240">
    <property type="entry name" value="TRYPSIN_DOM"/>
    <property type="match status" value="1"/>
</dbReference>
<dbReference type="PROSITE" id="PS00134">
    <property type="entry name" value="TRYPSIN_HIS"/>
    <property type="match status" value="1"/>
</dbReference>
<dbReference type="PROSITE" id="PS00135">
    <property type="entry name" value="TRYPSIN_SER"/>
    <property type="match status" value="1"/>
</dbReference>
<evidence type="ECO:0000250" key="1"/>
<evidence type="ECO:0000255" key="2">
    <source>
        <dbReference type="PROSITE-ProRule" id="PRU00274"/>
    </source>
</evidence>
<evidence type="ECO:0000305" key="3"/>
<sequence>MLKIAVLLSVLACALAGTIPDGLLPQLDGRIVGGYETSIDAHPYQVSLQRFGSHFCGGSIYSHDIVITAAHCLQSVDAKDLKIRVGSTYWRSGGSVHSVRSFRNHEGYNARTMVNDIAIVRIESDLSFRSSIRAVRIADHNPREGATAVVSGWGTTESGGSTIPDHLLAVDLEIVDVSRCRSGEFGYGKKIKDTMLCAYAPNKDACQGDSGGPLVSGDRLVGVVSWGYGCGDVRYPGVYADVAHFHEWIERTAREV</sequence>
<protein>
    <recommendedName>
        <fullName>Trypsin epsilon</fullName>
        <ecNumber>3.4.21.4</ecNumber>
    </recommendedName>
</protein>
<organism>
    <name type="scientific">Drosophila erecta</name>
    <name type="common">Fruit fly</name>
    <dbReference type="NCBI Taxonomy" id="7220"/>
    <lineage>
        <taxon>Eukaryota</taxon>
        <taxon>Metazoa</taxon>
        <taxon>Ecdysozoa</taxon>
        <taxon>Arthropoda</taxon>
        <taxon>Hexapoda</taxon>
        <taxon>Insecta</taxon>
        <taxon>Pterygota</taxon>
        <taxon>Neoptera</taxon>
        <taxon>Endopterygota</taxon>
        <taxon>Diptera</taxon>
        <taxon>Brachycera</taxon>
        <taxon>Muscomorpha</taxon>
        <taxon>Ephydroidea</taxon>
        <taxon>Drosophilidae</taxon>
        <taxon>Drosophila</taxon>
        <taxon>Sophophora</taxon>
    </lineage>
</organism>
<reference key="1">
    <citation type="journal article" date="1999" name="Mol. Biol. Evol.">
        <title>Concerted evolution within a trypsin gene cluster in Drosophila.</title>
        <authorList>
            <person name="Wang S."/>
            <person name="Magoulas C."/>
            <person name="Hickey D.A."/>
        </authorList>
    </citation>
    <scope>NUCLEOTIDE SEQUENCE [GENOMIC DNA]</scope>
</reference>
<proteinExistence type="inferred from homology"/>
<feature type="signal peptide" evidence="3">
    <location>
        <begin position="1"/>
        <end position="22"/>
    </location>
</feature>
<feature type="propeptide" id="PRO_0000028271" description="Activation peptide">
    <location>
        <begin position="23"/>
        <end position="30"/>
    </location>
</feature>
<feature type="chain" id="PRO_0000028272" description="Trypsin epsilon">
    <location>
        <begin position="31"/>
        <end position="256"/>
    </location>
</feature>
<feature type="domain" description="Peptidase S1" evidence="2">
    <location>
        <begin position="31"/>
        <end position="254"/>
    </location>
</feature>
<feature type="active site" description="Charge relay system" evidence="1">
    <location>
        <position position="71"/>
    </location>
</feature>
<feature type="active site" description="Charge relay system" evidence="1">
    <location>
        <position position="116"/>
    </location>
</feature>
<feature type="active site" description="Charge relay system" evidence="1">
    <location>
        <position position="210"/>
    </location>
</feature>
<feature type="site" description="Required for specificity" evidence="1">
    <location>
        <position position="204"/>
    </location>
</feature>
<feature type="disulfide bond" evidence="2">
    <location>
        <begin position="56"/>
        <end position="72"/>
    </location>
</feature>
<feature type="disulfide bond" evidence="2">
    <location>
        <begin position="180"/>
        <end position="197"/>
    </location>
</feature>
<feature type="disulfide bond" evidence="2">
    <location>
        <begin position="206"/>
        <end position="230"/>
    </location>
</feature>
<name>TRYE_DROER</name>